<accession>B7UJB0</accession>
<gene>
    <name evidence="1" type="primary">rnhA</name>
    <name type="ordered locus">E2348C_0214</name>
</gene>
<feature type="chain" id="PRO_1000194433" description="Ribonuclease H">
    <location>
        <begin position="1"/>
        <end position="155"/>
    </location>
</feature>
<feature type="domain" description="RNase H type-1" evidence="2">
    <location>
        <begin position="1"/>
        <end position="142"/>
    </location>
</feature>
<feature type="binding site" evidence="1">
    <location>
        <position position="10"/>
    </location>
    <ligand>
        <name>Mg(2+)</name>
        <dbReference type="ChEBI" id="CHEBI:18420"/>
        <label>1</label>
    </ligand>
</feature>
<feature type="binding site" evidence="1">
    <location>
        <position position="10"/>
    </location>
    <ligand>
        <name>Mg(2+)</name>
        <dbReference type="ChEBI" id="CHEBI:18420"/>
        <label>2</label>
    </ligand>
</feature>
<feature type="binding site" evidence="1">
    <location>
        <position position="48"/>
    </location>
    <ligand>
        <name>Mg(2+)</name>
        <dbReference type="ChEBI" id="CHEBI:18420"/>
        <label>1</label>
    </ligand>
</feature>
<feature type="binding site" evidence="1">
    <location>
        <position position="70"/>
    </location>
    <ligand>
        <name>Mg(2+)</name>
        <dbReference type="ChEBI" id="CHEBI:18420"/>
        <label>1</label>
    </ligand>
</feature>
<feature type="binding site" evidence="1">
    <location>
        <position position="134"/>
    </location>
    <ligand>
        <name>Mg(2+)</name>
        <dbReference type="ChEBI" id="CHEBI:18420"/>
        <label>2</label>
    </ligand>
</feature>
<reference key="1">
    <citation type="journal article" date="2009" name="J. Bacteriol.">
        <title>Complete genome sequence and comparative genome analysis of enteropathogenic Escherichia coli O127:H6 strain E2348/69.</title>
        <authorList>
            <person name="Iguchi A."/>
            <person name="Thomson N.R."/>
            <person name="Ogura Y."/>
            <person name="Saunders D."/>
            <person name="Ooka T."/>
            <person name="Henderson I.R."/>
            <person name="Harris D."/>
            <person name="Asadulghani M."/>
            <person name="Kurokawa K."/>
            <person name="Dean P."/>
            <person name="Kenny B."/>
            <person name="Quail M.A."/>
            <person name="Thurston S."/>
            <person name="Dougan G."/>
            <person name="Hayashi T."/>
            <person name="Parkhill J."/>
            <person name="Frankel G."/>
        </authorList>
    </citation>
    <scope>NUCLEOTIDE SEQUENCE [LARGE SCALE GENOMIC DNA]</scope>
    <source>
        <strain>E2348/69 / EPEC</strain>
    </source>
</reference>
<name>RNH_ECO27</name>
<comment type="function">
    <text evidence="1">Endonuclease that specifically degrades the RNA of RNA-DNA hybrids.</text>
</comment>
<comment type="catalytic activity">
    <reaction evidence="1">
        <text>Endonucleolytic cleavage to 5'-phosphomonoester.</text>
        <dbReference type="EC" id="3.1.26.4"/>
    </reaction>
</comment>
<comment type="cofactor">
    <cofactor evidence="1">
        <name>Mg(2+)</name>
        <dbReference type="ChEBI" id="CHEBI:18420"/>
    </cofactor>
    <text evidence="1">Binds 1 Mg(2+) ion per subunit. May bind a second metal ion at a regulatory site, or after substrate binding.</text>
</comment>
<comment type="subunit">
    <text evidence="1">Monomer.</text>
</comment>
<comment type="subcellular location">
    <subcellularLocation>
        <location evidence="1">Cytoplasm</location>
    </subcellularLocation>
</comment>
<comment type="similarity">
    <text evidence="1">Belongs to the RNase H family.</text>
</comment>
<keyword id="KW-0963">Cytoplasm</keyword>
<keyword id="KW-0255">Endonuclease</keyword>
<keyword id="KW-0378">Hydrolase</keyword>
<keyword id="KW-0460">Magnesium</keyword>
<keyword id="KW-0479">Metal-binding</keyword>
<keyword id="KW-0540">Nuclease</keyword>
<keyword id="KW-1185">Reference proteome</keyword>
<evidence type="ECO:0000255" key="1">
    <source>
        <dbReference type="HAMAP-Rule" id="MF_00042"/>
    </source>
</evidence>
<evidence type="ECO:0000255" key="2">
    <source>
        <dbReference type="PROSITE-ProRule" id="PRU00408"/>
    </source>
</evidence>
<proteinExistence type="inferred from homology"/>
<protein>
    <recommendedName>
        <fullName evidence="1">Ribonuclease H</fullName>
        <shortName evidence="1">RNase H</shortName>
        <ecNumber evidence="1">3.1.26.4</ecNumber>
    </recommendedName>
</protein>
<organism>
    <name type="scientific">Escherichia coli O127:H6 (strain E2348/69 / EPEC)</name>
    <dbReference type="NCBI Taxonomy" id="574521"/>
    <lineage>
        <taxon>Bacteria</taxon>
        <taxon>Pseudomonadati</taxon>
        <taxon>Pseudomonadota</taxon>
        <taxon>Gammaproteobacteria</taxon>
        <taxon>Enterobacterales</taxon>
        <taxon>Enterobacteriaceae</taxon>
        <taxon>Escherichia</taxon>
    </lineage>
</organism>
<sequence>MLKQVEIFTDGSCLGNPGPGGYGAILRYRGHEKTFSAGYTRTTNNRMELMAAIVALEALKEHCEVILSTDSQYVRQGITQWIHNWKKRGWKTADKKPVKNVDLWQRLDAALGQHQIKWEWVKGHAGHPENERCDELARAAAMNPTLEDTGYQVEV</sequence>
<dbReference type="EC" id="3.1.26.4" evidence="1"/>
<dbReference type="EMBL" id="FM180568">
    <property type="protein sequence ID" value="CAS07762.1"/>
    <property type="molecule type" value="Genomic_DNA"/>
</dbReference>
<dbReference type="RefSeq" id="WP_000917867.1">
    <property type="nucleotide sequence ID" value="NC_011601.1"/>
</dbReference>
<dbReference type="SMR" id="B7UJB0"/>
<dbReference type="KEGG" id="ecg:E2348C_0214"/>
<dbReference type="HOGENOM" id="CLU_030894_6_0_6"/>
<dbReference type="Proteomes" id="UP000008205">
    <property type="component" value="Chromosome"/>
</dbReference>
<dbReference type="GO" id="GO:0005737">
    <property type="term" value="C:cytoplasm"/>
    <property type="evidence" value="ECO:0007669"/>
    <property type="project" value="UniProtKB-SubCell"/>
</dbReference>
<dbReference type="GO" id="GO:0000287">
    <property type="term" value="F:magnesium ion binding"/>
    <property type="evidence" value="ECO:0007669"/>
    <property type="project" value="UniProtKB-UniRule"/>
</dbReference>
<dbReference type="GO" id="GO:0003676">
    <property type="term" value="F:nucleic acid binding"/>
    <property type="evidence" value="ECO:0007669"/>
    <property type="project" value="InterPro"/>
</dbReference>
<dbReference type="GO" id="GO:0004523">
    <property type="term" value="F:RNA-DNA hybrid ribonuclease activity"/>
    <property type="evidence" value="ECO:0007669"/>
    <property type="project" value="UniProtKB-UniRule"/>
</dbReference>
<dbReference type="GO" id="GO:0043137">
    <property type="term" value="P:DNA replication, removal of RNA primer"/>
    <property type="evidence" value="ECO:0007669"/>
    <property type="project" value="TreeGrafter"/>
</dbReference>
<dbReference type="CDD" id="cd09278">
    <property type="entry name" value="RNase_HI_prokaryote_like"/>
    <property type="match status" value="1"/>
</dbReference>
<dbReference type="FunFam" id="3.30.420.10:FF:000008">
    <property type="entry name" value="Ribonuclease H"/>
    <property type="match status" value="1"/>
</dbReference>
<dbReference type="Gene3D" id="3.30.420.10">
    <property type="entry name" value="Ribonuclease H-like superfamily/Ribonuclease H"/>
    <property type="match status" value="1"/>
</dbReference>
<dbReference type="HAMAP" id="MF_00042">
    <property type="entry name" value="RNase_H"/>
    <property type="match status" value="1"/>
</dbReference>
<dbReference type="InterPro" id="IPR050092">
    <property type="entry name" value="RNase_H"/>
</dbReference>
<dbReference type="InterPro" id="IPR012337">
    <property type="entry name" value="RNaseH-like_sf"/>
</dbReference>
<dbReference type="InterPro" id="IPR002156">
    <property type="entry name" value="RNaseH_domain"/>
</dbReference>
<dbReference type="InterPro" id="IPR036397">
    <property type="entry name" value="RNaseH_sf"/>
</dbReference>
<dbReference type="InterPro" id="IPR022892">
    <property type="entry name" value="RNaseHI"/>
</dbReference>
<dbReference type="NCBIfam" id="NF001236">
    <property type="entry name" value="PRK00203.1"/>
    <property type="match status" value="1"/>
</dbReference>
<dbReference type="PANTHER" id="PTHR10642">
    <property type="entry name" value="RIBONUCLEASE H1"/>
    <property type="match status" value="1"/>
</dbReference>
<dbReference type="PANTHER" id="PTHR10642:SF26">
    <property type="entry name" value="RIBONUCLEASE H1"/>
    <property type="match status" value="1"/>
</dbReference>
<dbReference type="Pfam" id="PF00075">
    <property type="entry name" value="RNase_H"/>
    <property type="match status" value="1"/>
</dbReference>
<dbReference type="SUPFAM" id="SSF53098">
    <property type="entry name" value="Ribonuclease H-like"/>
    <property type="match status" value="1"/>
</dbReference>
<dbReference type="PROSITE" id="PS50879">
    <property type="entry name" value="RNASE_H_1"/>
    <property type="match status" value="1"/>
</dbReference>